<feature type="chain" id="PRO_1000040376" description="6,7-dimethyl-8-ribityllumazine synthase">
    <location>
        <begin position="1"/>
        <end position="171"/>
    </location>
</feature>
<feature type="region of interest" description="Disordered" evidence="2">
    <location>
        <begin position="150"/>
        <end position="171"/>
    </location>
</feature>
<feature type="compositionally biased region" description="Acidic residues" evidence="2">
    <location>
        <begin position="154"/>
        <end position="171"/>
    </location>
</feature>
<feature type="active site" description="Proton donor" evidence="1">
    <location>
        <position position="90"/>
    </location>
</feature>
<feature type="binding site" evidence="1">
    <location>
        <position position="24"/>
    </location>
    <ligand>
        <name>5-amino-6-(D-ribitylamino)uracil</name>
        <dbReference type="ChEBI" id="CHEBI:15934"/>
    </ligand>
</feature>
<feature type="binding site" evidence="1">
    <location>
        <begin position="58"/>
        <end position="60"/>
    </location>
    <ligand>
        <name>5-amino-6-(D-ribitylamino)uracil</name>
        <dbReference type="ChEBI" id="CHEBI:15934"/>
    </ligand>
</feature>
<feature type="binding site" evidence="1">
    <location>
        <begin position="82"/>
        <end position="84"/>
    </location>
    <ligand>
        <name>5-amino-6-(D-ribitylamino)uracil</name>
        <dbReference type="ChEBI" id="CHEBI:15934"/>
    </ligand>
</feature>
<feature type="binding site" evidence="1">
    <location>
        <begin position="87"/>
        <end position="88"/>
    </location>
    <ligand>
        <name>(2S)-2-hydroxy-3-oxobutyl phosphate</name>
        <dbReference type="ChEBI" id="CHEBI:58830"/>
    </ligand>
</feature>
<feature type="binding site" evidence="1">
    <location>
        <position position="115"/>
    </location>
    <ligand>
        <name>5-amino-6-(D-ribitylamino)uracil</name>
        <dbReference type="ChEBI" id="CHEBI:15934"/>
    </ligand>
</feature>
<feature type="binding site" evidence="1">
    <location>
        <position position="129"/>
    </location>
    <ligand>
        <name>(2S)-2-hydroxy-3-oxobutyl phosphate</name>
        <dbReference type="ChEBI" id="CHEBI:58830"/>
    </ligand>
</feature>
<evidence type="ECO:0000255" key="1">
    <source>
        <dbReference type="HAMAP-Rule" id="MF_00178"/>
    </source>
</evidence>
<evidence type="ECO:0000256" key="2">
    <source>
        <dbReference type="SAM" id="MobiDB-lite"/>
    </source>
</evidence>
<accession>Q1BYB6</accession>
<proteinExistence type="inferred from homology"/>
<keyword id="KW-0686">Riboflavin biosynthesis</keyword>
<keyword id="KW-0808">Transferase</keyword>
<protein>
    <recommendedName>
        <fullName evidence="1">6,7-dimethyl-8-ribityllumazine synthase</fullName>
        <shortName evidence="1">DMRL synthase</shortName>
        <shortName evidence="1">LS</shortName>
        <shortName evidence="1">Lumazine synthase</shortName>
        <ecNumber evidence="1">2.5.1.78</ecNumber>
    </recommendedName>
</protein>
<sequence>MEIGQYQPNLEGDGLRIGIVQSRFNEPVCNGLADACVEELERLGVTGEDVLLVSVPGALEIPLALQKLAESGQFDALIALGAVIRGETYHFELVSNESGAGITRIGLDFNLPIANAVLTTENDEQAVARMTEKGRDAARVAVEMANLTMALDQLGDDEDEEEDEDDEEERA</sequence>
<gene>
    <name evidence="1" type="primary">ribH</name>
    <name type="ordered locus">Bcen_0477</name>
</gene>
<comment type="function">
    <text evidence="1">Catalyzes the formation of 6,7-dimethyl-8-ribityllumazine by condensation of 5-amino-6-(D-ribitylamino)uracil with 3,4-dihydroxy-2-butanone 4-phosphate. This is the penultimate step in the biosynthesis of riboflavin.</text>
</comment>
<comment type="catalytic activity">
    <reaction evidence="1">
        <text>(2S)-2-hydroxy-3-oxobutyl phosphate + 5-amino-6-(D-ribitylamino)uracil = 6,7-dimethyl-8-(1-D-ribityl)lumazine + phosphate + 2 H2O + H(+)</text>
        <dbReference type="Rhea" id="RHEA:26152"/>
        <dbReference type="ChEBI" id="CHEBI:15377"/>
        <dbReference type="ChEBI" id="CHEBI:15378"/>
        <dbReference type="ChEBI" id="CHEBI:15934"/>
        <dbReference type="ChEBI" id="CHEBI:43474"/>
        <dbReference type="ChEBI" id="CHEBI:58201"/>
        <dbReference type="ChEBI" id="CHEBI:58830"/>
        <dbReference type="EC" id="2.5.1.78"/>
    </reaction>
</comment>
<comment type="pathway">
    <text evidence="1">Cofactor biosynthesis; riboflavin biosynthesis; riboflavin from 2-hydroxy-3-oxobutyl phosphate and 5-amino-6-(D-ribitylamino)uracil: step 1/2.</text>
</comment>
<comment type="similarity">
    <text evidence="1">Belongs to the DMRL synthase family.</text>
</comment>
<organism>
    <name type="scientific">Burkholderia orbicola (strain AU 1054)</name>
    <dbReference type="NCBI Taxonomy" id="331271"/>
    <lineage>
        <taxon>Bacteria</taxon>
        <taxon>Pseudomonadati</taxon>
        <taxon>Pseudomonadota</taxon>
        <taxon>Betaproteobacteria</taxon>
        <taxon>Burkholderiales</taxon>
        <taxon>Burkholderiaceae</taxon>
        <taxon>Burkholderia</taxon>
        <taxon>Burkholderia cepacia complex</taxon>
        <taxon>Burkholderia orbicola</taxon>
    </lineage>
</organism>
<reference key="1">
    <citation type="submission" date="2006-05" db="EMBL/GenBank/DDBJ databases">
        <title>Complete sequence of chromosome 1 of Burkholderia cenocepacia AU 1054.</title>
        <authorList>
            <consortium name="US DOE Joint Genome Institute"/>
            <person name="Copeland A."/>
            <person name="Lucas S."/>
            <person name="Lapidus A."/>
            <person name="Barry K."/>
            <person name="Detter J.C."/>
            <person name="Glavina del Rio T."/>
            <person name="Hammon N."/>
            <person name="Israni S."/>
            <person name="Dalin E."/>
            <person name="Tice H."/>
            <person name="Pitluck S."/>
            <person name="Chain P."/>
            <person name="Malfatti S."/>
            <person name="Shin M."/>
            <person name="Vergez L."/>
            <person name="Schmutz J."/>
            <person name="Larimer F."/>
            <person name="Land M."/>
            <person name="Hauser L."/>
            <person name="Kyrpides N."/>
            <person name="Lykidis A."/>
            <person name="LiPuma J.J."/>
            <person name="Konstantinidis K."/>
            <person name="Tiedje J.M."/>
            <person name="Richardson P."/>
        </authorList>
    </citation>
    <scope>NUCLEOTIDE SEQUENCE [LARGE SCALE GENOMIC DNA]</scope>
    <source>
        <strain>AU 1054</strain>
    </source>
</reference>
<name>RISB_BURO1</name>
<dbReference type="EC" id="2.5.1.78" evidence="1"/>
<dbReference type="EMBL" id="CP000378">
    <property type="protein sequence ID" value="ABF75389.1"/>
    <property type="molecule type" value="Genomic_DNA"/>
</dbReference>
<dbReference type="SMR" id="Q1BYB6"/>
<dbReference type="HOGENOM" id="CLU_089358_1_2_4"/>
<dbReference type="UniPathway" id="UPA00275">
    <property type="reaction ID" value="UER00404"/>
</dbReference>
<dbReference type="GO" id="GO:0005829">
    <property type="term" value="C:cytosol"/>
    <property type="evidence" value="ECO:0007669"/>
    <property type="project" value="TreeGrafter"/>
</dbReference>
<dbReference type="GO" id="GO:0009349">
    <property type="term" value="C:riboflavin synthase complex"/>
    <property type="evidence" value="ECO:0007669"/>
    <property type="project" value="InterPro"/>
</dbReference>
<dbReference type="GO" id="GO:0000906">
    <property type="term" value="F:6,7-dimethyl-8-ribityllumazine synthase activity"/>
    <property type="evidence" value="ECO:0007669"/>
    <property type="project" value="UniProtKB-UniRule"/>
</dbReference>
<dbReference type="GO" id="GO:0009231">
    <property type="term" value="P:riboflavin biosynthetic process"/>
    <property type="evidence" value="ECO:0007669"/>
    <property type="project" value="UniProtKB-UniRule"/>
</dbReference>
<dbReference type="CDD" id="cd09209">
    <property type="entry name" value="Lumazine_synthase-I"/>
    <property type="match status" value="1"/>
</dbReference>
<dbReference type="Gene3D" id="3.40.50.960">
    <property type="entry name" value="Lumazine/riboflavin synthase"/>
    <property type="match status" value="1"/>
</dbReference>
<dbReference type="HAMAP" id="MF_00178">
    <property type="entry name" value="Lumazine_synth"/>
    <property type="match status" value="1"/>
</dbReference>
<dbReference type="InterPro" id="IPR034964">
    <property type="entry name" value="LS"/>
</dbReference>
<dbReference type="InterPro" id="IPR002180">
    <property type="entry name" value="LS/RS"/>
</dbReference>
<dbReference type="InterPro" id="IPR036467">
    <property type="entry name" value="LS/RS_sf"/>
</dbReference>
<dbReference type="NCBIfam" id="TIGR00114">
    <property type="entry name" value="lumazine-synth"/>
    <property type="match status" value="1"/>
</dbReference>
<dbReference type="PANTHER" id="PTHR21058:SF0">
    <property type="entry name" value="6,7-DIMETHYL-8-RIBITYLLUMAZINE SYNTHASE"/>
    <property type="match status" value="1"/>
</dbReference>
<dbReference type="PANTHER" id="PTHR21058">
    <property type="entry name" value="6,7-DIMETHYL-8-RIBITYLLUMAZINE SYNTHASE DMRL SYNTHASE LUMAZINE SYNTHASE"/>
    <property type="match status" value="1"/>
</dbReference>
<dbReference type="Pfam" id="PF00885">
    <property type="entry name" value="DMRL_synthase"/>
    <property type="match status" value="1"/>
</dbReference>
<dbReference type="SUPFAM" id="SSF52121">
    <property type="entry name" value="Lumazine synthase"/>
    <property type="match status" value="1"/>
</dbReference>